<feature type="chain" id="PRO_1000002182" description="SsrA-binding protein">
    <location>
        <begin position="1"/>
        <end position="161"/>
    </location>
</feature>
<keyword id="KW-0963">Cytoplasm</keyword>
<keyword id="KW-1185">Reference proteome</keyword>
<keyword id="KW-0694">RNA-binding</keyword>
<organism>
    <name type="scientific">Vesicomyosocius okutanii subsp. Calyptogena okutanii (strain HA)</name>
    <dbReference type="NCBI Taxonomy" id="412965"/>
    <lineage>
        <taxon>Bacteria</taxon>
        <taxon>Pseudomonadati</taxon>
        <taxon>Pseudomonadota</taxon>
        <taxon>Gammaproteobacteria</taxon>
        <taxon>Candidatus Pseudothioglobaceae</taxon>
        <taxon>Candidatus Vesicomyosocius</taxon>
    </lineage>
</organism>
<evidence type="ECO:0000255" key="1">
    <source>
        <dbReference type="HAMAP-Rule" id="MF_00023"/>
    </source>
</evidence>
<sequence length="161" mass="18907">MAKKNKKISLNTIAFNKKARHVYFIEQTLEAGLSLEGWEVKSLRDSKVQIKESYVILRSNEIFLYGAHISPLKSVSTHVNSDPIRTRKLLLNRLEINRIKEKINQKGATIVALKLYWIRGMVKLEIGLAKGKKSYDKRQDNKLRDWQRDKQRTLKQINYRL</sequence>
<reference key="1">
    <citation type="journal article" date="2007" name="Curr. Biol.">
        <title>Reduced genome of the thioautotrophic intracellular symbiont in a deep-sea clam, Calyptogena okutanii.</title>
        <authorList>
            <person name="Kuwahara H."/>
            <person name="Yoshida T."/>
            <person name="Takaki Y."/>
            <person name="Shimamura S."/>
            <person name="Nishi S."/>
            <person name="Harada M."/>
            <person name="Matsuyama K."/>
            <person name="Takishita K."/>
            <person name="Kawato M."/>
            <person name="Uematsu K."/>
            <person name="Fujiwara Y."/>
            <person name="Sato T."/>
            <person name="Kato C."/>
            <person name="Kitagawa M."/>
            <person name="Kato I."/>
            <person name="Maruyama T."/>
        </authorList>
    </citation>
    <scope>NUCLEOTIDE SEQUENCE [LARGE SCALE GENOMIC DNA]</scope>
    <source>
        <strain>HA</strain>
    </source>
</reference>
<protein>
    <recommendedName>
        <fullName evidence="1">SsrA-binding protein</fullName>
    </recommendedName>
    <alternativeName>
        <fullName evidence="1">Small protein B</fullName>
    </alternativeName>
</protein>
<dbReference type="EMBL" id="AP009247">
    <property type="protein sequence ID" value="BAF61479.1"/>
    <property type="molecule type" value="Genomic_DNA"/>
</dbReference>
<dbReference type="RefSeq" id="WP_011929749.1">
    <property type="nucleotide sequence ID" value="NC_009465.1"/>
</dbReference>
<dbReference type="SMR" id="A5CX31"/>
<dbReference type="STRING" id="412965.COSY_0354"/>
<dbReference type="KEGG" id="vok:COSY_0354"/>
<dbReference type="eggNOG" id="COG0691">
    <property type="taxonomic scope" value="Bacteria"/>
</dbReference>
<dbReference type="HOGENOM" id="CLU_108953_3_0_6"/>
<dbReference type="OrthoDB" id="9805462at2"/>
<dbReference type="Proteomes" id="UP000000247">
    <property type="component" value="Chromosome"/>
</dbReference>
<dbReference type="GO" id="GO:0005829">
    <property type="term" value="C:cytosol"/>
    <property type="evidence" value="ECO:0007669"/>
    <property type="project" value="TreeGrafter"/>
</dbReference>
<dbReference type="GO" id="GO:0003723">
    <property type="term" value="F:RNA binding"/>
    <property type="evidence" value="ECO:0007669"/>
    <property type="project" value="UniProtKB-UniRule"/>
</dbReference>
<dbReference type="GO" id="GO:0070929">
    <property type="term" value="P:trans-translation"/>
    <property type="evidence" value="ECO:0007669"/>
    <property type="project" value="UniProtKB-UniRule"/>
</dbReference>
<dbReference type="CDD" id="cd09294">
    <property type="entry name" value="SmpB"/>
    <property type="match status" value="1"/>
</dbReference>
<dbReference type="Gene3D" id="2.40.280.10">
    <property type="match status" value="1"/>
</dbReference>
<dbReference type="HAMAP" id="MF_00023">
    <property type="entry name" value="SmpB"/>
    <property type="match status" value="1"/>
</dbReference>
<dbReference type="InterPro" id="IPR023620">
    <property type="entry name" value="SmpB"/>
</dbReference>
<dbReference type="InterPro" id="IPR000037">
    <property type="entry name" value="SsrA-bd_prot"/>
</dbReference>
<dbReference type="InterPro" id="IPR020081">
    <property type="entry name" value="SsrA-bd_prot_CS"/>
</dbReference>
<dbReference type="NCBIfam" id="NF003843">
    <property type="entry name" value="PRK05422.1"/>
    <property type="match status" value="1"/>
</dbReference>
<dbReference type="NCBIfam" id="TIGR00086">
    <property type="entry name" value="smpB"/>
    <property type="match status" value="1"/>
</dbReference>
<dbReference type="PANTHER" id="PTHR30308:SF2">
    <property type="entry name" value="SSRA-BINDING PROTEIN"/>
    <property type="match status" value="1"/>
</dbReference>
<dbReference type="PANTHER" id="PTHR30308">
    <property type="entry name" value="TMRNA-BINDING COMPONENT OF TRANS-TRANSLATION TAGGING COMPLEX"/>
    <property type="match status" value="1"/>
</dbReference>
<dbReference type="Pfam" id="PF01668">
    <property type="entry name" value="SmpB"/>
    <property type="match status" value="1"/>
</dbReference>
<dbReference type="SUPFAM" id="SSF74982">
    <property type="entry name" value="Small protein B (SmpB)"/>
    <property type="match status" value="1"/>
</dbReference>
<dbReference type="PROSITE" id="PS01317">
    <property type="entry name" value="SSRP"/>
    <property type="match status" value="1"/>
</dbReference>
<comment type="function">
    <text evidence="1">Required for rescue of stalled ribosomes mediated by trans-translation. Binds to transfer-messenger RNA (tmRNA), required for stable association of tmRNA with ribosomes. tmRNA and SmpB together mimic tRNA shape, replacing the anticodon stem-loop with SmpB. tmRNA is encoded by the ssrA gene; the 2 termini fold to resemble tRNA(Ala) and it encodes a 'tag peptide', a short internal open reading frame. During trans-translation Ala-aminoacylated tmRNA acts like a tRNA, entering the A-site of stalled ribosomes, displacing the stalled mRNA. The ribosome then switches to translate the ORF on the tmRNA; the nascent peptide is terminated with the 'tag peptide' encoded by the tmRNA and targeted for degradation. The ribosome is freed to recommence translation, which seems to be the essential function of trans-translation.</text>
</comment>
<comment type="subcellular location">
    <subcellularLocation>
        <location evidence="1">Cytoplasm</location>
    </subcellularLocation>
    <text evidence="1">The tmRNA-SmpB complex associates with stalled 70S ribosomes.</text>
</comment>
<comment type="similarity">
    <text evidence="1">Belongs to the SmpB family.</text>
</comment>
<name>SSRP_VESOH</name>
<accession>A5CX31</accession>
<proteinExistence type="inferred from homology"/>
<gene>
    <name evidence="1" type="primary">smpB</name>
    <name type="ordered locus">COSY_0354</name>
</gene>